<reference key="1">
    <citation type="journal article" date="2008" name="BMC Genomics">
        <title>The genome sequence of the fish pathogen Aliivibrio salmonicida strain LFI1238 shows extensive evidence of gene decay.</title>
        <authorList>
            <person name="Hjerde E."/>
            <person name="Lorentzen M.S."/>
            <person name="Holden M.T."/>
            <person name="Seeger K."/>
            <person name="Paulsen S."/>
            <person name="Bason N."/>
            <person name="Churcher C."/>
            <person name="Harris D."/>
            <person name="Norbertczak H."/>
            <person name="Quail M.A."/>
            <person name="Sanders S."/>
            <person name="Thurston S."/>
            <person name="Parkhill J."/>
            <person name="Willassen N.P."/>
            <person name="Thomson N.R."/>
        </authorList>
    </citation>
    <scope>NUCLEOTIDE SEQUENCE [LARGE SCALE GENOMIC DNA]</scope>
    <source>
        <strain>LFI1238</strain>
    </source>
</reference>
<gene>
    <name type="ordered locus">VSAL_I0741</name>
</gene>
<accession>B6EGZ9</accession>
<name>Y741_ALISL</name>
<protein>
    <recommendedName>
        <fullName evidence="1">UPF0597 protein VSAL_I0741</fullName>
    </recommendedName>
</protein>
<organism>
    <name type="scientific">Aliivibrio salmonicida (strain LFI1238)</name>
    <name type="common">Vibrio salmonicida (strain LFI1238)</name>
    <dbReference type="NCBI Taxonomy" id="316275"/>
    <lineage>
        <taxon>Bacteria</taxon>
        <taxon>Pseudomonadati</taxon>
        <taxon>Pseudomonadota</taxon>
        <taxon>Gammaproteobacteria</taxon>
        <taxon>Vibrionales</taxon>
        <taxon>Vibrionaceae</taxon>
        <taxon>Aliivibrio</taxon>
    </lineage>
</organism>
<feature type="chain" id="PRO_1000188447" description="UPF0597 protein VSAL_I0741">
    <location>
        <begin position="1"/>
        <end position="425"/>
    </location>
</feature>
<sequence>MNSTWKQYITILKNVVKPALGCTEPICAAYATSVATQMLGEKAETIDVFVSDNLYKNSMGVFVPRTGRVGLAIAAAAGATGGNPEAGLEVLAKLTQSQVNEAQQLIDAGRVQVKRETTDEFIYCRVVVKGSQHHAEVTISGGHTLIVEKRLDDNVIFSLDSSLPKASTASICDGVDITISSIYDFATHAEFDDIKFILKAKDLNIALAQEGLKNPYGLEVGRTYQKNIDTGLLSKSLDSDILIYTSAASDARMGGANLPAMSNYGSGNQGIAATIPVVKMADFYNADEETLARAFIMSHLGAIYIKSHYPPLSAFCGNAVTSAAAAMAMVYLAGGSFEQSCSAIQNTISDTSGMICDGAKSTCAMKVGSSAQSAMKSSLLALNNHCVTKQGVIAEDVEKTIKNIGRMITTGMPNIDHEIIEIMAS</sequence>
<dbReference type="EMBL" id="FM178379">
    <property type="protein sequence ID" value="CAQ78426.1"/>
    <property type="molecule type" value="Genomic_DNA"/>
</dbReference>
<dbReference type="RefSeq" id="WP_012549546.1">
    <property type="nucleotide sequence ID" value="NC_011312.1"/>
</dbReference>
<dbReference type="KEGG" id="vsa:VSAL_I0741"/>
<dbReference type="eggNOG" id="COG3681">
    <property type="taxonomic scope" value="Bacteria"/>
</dbReference>
<dbReference type="HOGENOM" id="CLU_051840_0_0_6"/>
<dbReference type="Proteomes" id="UP000001730">
    <property type="component" value="Chromosome 1"/>
</dbReference>
<dbReference type="GO" id="GO:0080146">
    <property type="term" value="F:L-cysteine desulfhydrase activity"/>
    <property type="evidence" value="ECO:0007669"/>
    <property type="project" value="TreeGrafter"/>
</dbReference>
<dbReference type="GO" id="GO:0019450">
    <property type="term" value="P:L-cysteine catabolic process to pyruvate"/>
    <property type="evidence" value="ECO:0007669"/>
    <property type="project" value="TreeGrafter"/>
</dbReference>
<dbReference type="HAMAP" id="MF_01845">
    <property type="entry name" value="UPF0597"/>
    <property type="match status" value="1"/>
</dbReference>
<dbReference type="InterPro" id="IPR005130">
    <property type="entry name" value="Ser_deHydtase-like_asu"/>
</dbReference>
<dbReference type="InterPro" id="IPR021144">
    <property type="entry name" value="UPF0597"/>
</dbReference>
<dbReference type="PANTHER" id="PTHR30501">
    <property type="entry name" value="UPF0597 PROTEIN YHAM"/>
    <property type="match status" value="1"/>
</dbReference>
<dbReference type="PANTHER" id="PTHR30501:SF2">
    <property type="entry name" value="UPF0597 PROTEIN YHAM"/>
    <property type="match status" value="1"/>
</dbReference>
<dbReference type="Pfam" id="PF03313">
    <property type="entry name" value="SDH_alpha"/>
    <property type="match status" value="1"/>
</dbReference>
<dbReference type="PIRSF" id="PIRSF006054">
    <property type="entry name" value="UCP006054"/>
    <property type="match status" value="1"/>
</dbReference>
<evidence type="ECO:0000255" key="1">
    <source>
        <dbReference type="HAMAP-Rule" id="MF_01845"/>
    </source>
</evidence>
<comment type="similarity">
    <text evidence="1">Belongs to the UPF0597 family.</text>
</comment>
<proteinExistence type="inferred from homology"/>